<dbReference type="EMBL" id="AE017355">
    <property type="protein sequence ID" value="AAT62089.1"/>
    <property type="molecule type" value="Genomic_DNA"/>
</dbReference>
<dbReference type="RefSeq" id="WP_000366197.1">
    <property type="nucleotide sequence ID" value="NC_005957.1"/>
</dbReference>
<dbReference type="RefSeq" id="YP_034733.1">
    <property type="nucleotide sequence ID" value="NC_005957.1"/>
</dbReference>
<dbReference type="SMR" id="Q6HNY7"/>
<dbReference type="KEGG" id="btk:BT9727_0383"/>
<dbReference type="PATRIC" id="fig|281309.8.peg.406"/>
<dbReference type="HOGENOM" id="CLU_199533_1_0_9"/>
<dbReference type="PRO" id="PR:Q6HNY7"/>
<dbReference type="Proteomes" id="UP000001301">
    <property type="component" value="Chromosome"/>
</dbReference>
<dbReference type="HAMAP" id="MF_00829">
    <property type="entry name" value="UPF0435"/>
    <property type="match status" value="1"/>
</dbReference>
<dbReference type="InterPro" id="IPR009507">
    <property type="entry name" value="UPF0435"/>
</dbReference>
<dbReference type="Pfam" id="PF06569">
    <property type="entry name" value="DUF1128"/>
    <property type="match status" value="1"/>
</dbReference>
<gene>
    <name type="ordered locus">BT9727_0383</name>
</gene>
<sequence length="74" mass="8652">MDLSVKSEENVEYMVEAIKEKLRMVNAGAMRAASFNEEMYEDLRDIYEHVMKRETFSISEMQAITEELGTLIKK</sequence>
<proteinExistence type="inferred from homology"/>
<name>Y383_BACHK</name>
<comment type="similarity">
    <text evidence="1">Belongs to the UPF0435 family.</text>
</comment>
<feature type="chain" id="PRO_0000291408" description="UPF0435 protein BT9727_0383">
    <location>
        <begin position="1"/>
        <end position="74"/>
    </location>
</feature>
<accession>Q6HNY7</accession>
<reference key="1">
    <citation type="journal article" date="2006" name="J. Bacteriol.">
        <title>Pathogenomic sequence analysis of Bacillus cereus and Bacillus thuringiensis isolates closely related to Bacillus anthracis.</title>
        <authorList>
            <person name="Han C.S."/>
            <person name="Xie G."/>
            <person name="Challacombe J.F."/>
            <person name="Altherr M.R."/>
            <person name="Bhotika S.S."/>
            <person name="Bruce D."/>
            <person name="Campbell C.S."/>
            <person name="Campbell M.L."/>
            <person name="Chen J."/>
            <person name="Chertkov O."/>
            <person name="Cleland C."/>
            <person name="Dimitrijevic M."/>
            <person name="Doggett N.A."/>
            <person name="Fawcett J.J."/>
            <person name="Glavina T."/>
            <person name="Goodwin L.A."/>
            <person name="Hill K.K."/>
            <person name="Hitchcock P."/>
            <person name="Jackson P.J."/>
            <person name="Keim P."/>
            <person name="Kewalramani A.R."/>
            <person name="Longmire J."/>
            <person name="Lucas S."/>
            <person name="Malfatti S."/>
            <person name="McMurry K."/>
            <person name="Meincke L.J."/>
            <person name="Misra M."/>
            <person name="Moseman B.L."/>
            <person name="Mundt M."/>
            <person name="Munk A.C."/>
            <person name="Okinaka R.T."/>
            <person name="Parson-Quintana B."/>
            <person name="Reilly L.P."/>
            <person name="Richardson P."/>
            <person name="Robinson D.L."/>
            <person name="Rubin E."/>
            <person name="Saunders E."/>
            <person name="Tapia R."/>
            <person name="Tesmer J.G."/>
            <person name="Thayer N."/>
            <person name="Thompson L.S."/>
            <person name="Tice H."/>
            <person name="Ticknor L.O."/>
            <person name="Wills P.L."/>
            <person name="Brettin T.S."/>
            <person name="Gilna P."/>
        </authorList>
    </citation>
    <scope>NUCLEOTIDE SEQUENCE [LARGE SCALE GENOMIC DNA]</scope>
    <source>
        <strain>97-27</strain>
    </source>
</reference>
<protein>
    <recommendedName>
        <fullName evidence="1">UPF0435 protein BT9727_0383</fullName>
    </recommendedName>
</protein>
<evidence type="ECO:0000255" key="1">
    <source>
        <dbReference type="HAMAP-Rule" id="MF_00829"/>
    </source>
</evidence>
<organism>
    <name type="scientific">Bacillus thuringiensis subsp. konkukian (strain 97-27)</name>
    <dbReference type="NCBI Taxonomy" id="281309"/>
    <lineage>
        <taxon>Bacteria</taxon>
        <taxon>Bacillati</taxon>
        <taxon>Bacillota</taxon>
        <taxon>Bacilli</taxon>
        <taxon>Bacillales</taxon>
        <taxon>Bacillaceae</taxon>
        <taxon>Bacillus</taxon>
        <taxon>Bacillus cereus group</taxon>
    </lineage>
</organism>